<keyword id="KW-0007">Acetylation</keyword>
<keyword id="KW-1003">Cell membrane</keyword>
<keyword id="KW-0333">Golgi apparatus</keyword>
<keyword id="KW-0342">GTP-binding</keyword>
<keyword id="KW-0378">Hydrolase</keyword>
<keyword id="KW-0449">Lipoprotein</keyword>
<keyword id="KW-0460">Magnesium</keyword>
<keyword id="KW-0472">Membrane</keyword>
<keyword id="KW-0479">Metal-binding</keyword>
<keyword id="KW-0488">Methylation</keyword>
<keyword id="KW-0547">Nucleotide-binding</keyword>
<keyword id="KW-0597">Phosphoprotein</keyword>
<keyword id="KW-0636">Prenylation</keyword>
<keyword id="KW-0653">Protein transport</keyword>
<keyword id="KW-1185">Reference proteome</keyword>
<keyword id="KW-0813">Transport</keyword>
<reference key="1">
    <citation type="submission" date="2003-12" db="EMBL/GenBank/DDBJ databases">
        <title>Hamster Rab3B.</title>
        <authorList>
            <person name="Shinahara W."/>
            <person name="Nishimura N."/>
            <person name="Yamaguchi Y."/>
            <person name="Manabe S."/>
            <person name="Sasaki T."/>
        </authorList>
    </citation>
    <scope>NUCLEOTIDE SEQUENCE [MRNA]</scope>
</reference>
<dbReference type="EC" id="3.6.5.2" evidence="4"/>
<dbReference type="EMBL" id="AB158368">
    <property type="protein sequence ID" value="BAD83699.1"/>
    <property type="molecule type" value="mRNA"/>
</dbReference>
<dbReference type="SMR" id="Q5KTJ7"/>
<dbReference type="STRING" id="10036.ENSMAUP00000012067"/>
<dbReference type="eggNOG" id="KOG0093">
    <property type="taxonomic scope" value="Eukaryota"/>
</dbReference>
<dbReference type="Proteomes" id="UP000189706">
    <property type="component" value="Unplaced"/>
</dbReference>
<dbReference type="GO" id="GO:0005794">
    <property type="term" value="C:Golgi apparatus"/>
    <property type="evidence" value="ECO:0007669"/>
    <property type="project" value="UniProtKB-SubCell"/>
</dbReference>
<dbReference type="GO" id="GO:0005886">
    <property type="term" value="C:plasma membrane"/>
    <property type="evidence" value="ECO:0007669"/>
    <property type="project" value="UniProtKB-SubCell"/>
</dbReference>
<dbReference type="GO" id="GO:0099503">
    <property type="term" value="C:secretory vesicle"/>
    <property type="evidence" value="ECO:0007669"/>
    <property type="project" value="UniProtKB-ARBA"/>
</dbReference>
<dbReference type="GO" id="GO:0005525">
    <property type="term" value="F:GTP binding"/>
    <property type="evidence" value="ECO:0007669"/>
    <property type="project" value="UniProtKB-KW"/>
</dbReference>
<dbReference type="GO" id="GO:0003924">
    <property type="term" value="F:GTPase activity"/>
    <property type="evidence" value="ECO:0007669"/>
    <property type="project" value="InterPro"/>
</dbReference>
<dbReference type="GO" id="GO:0015031">
    <property type="term" value="P:protein transport"/>
    <property type="evidence" value="ECO:0007669"/>
    <property type="project" value="UniProtKB-KW"/>
</dbReference>
<dbReference type="CDD" id="cd01865">
    <property type="entry name" value="Rab3"/>
    <property type="match status" value="1"/>
</dbReference>
<dbReference type="FunFam" id="3.40.50.300:FF:000206">
    <property type="entry name" value="Ras-related protein Rab-3C"/>
    <property type="match status" value="1"/>
</dbReference>
<dbReference type="Gene3D" id="3.40.50.300">
    <property type="entry name" value="P-loop containing nucleotide triphosphate hydrolases"/>
    <property type="match status" value="1"/>
</dbReference>
<dbReference type="InterPro" id="IPR027417">
    <property type="entry name" value="P-loop_NTPase"/>
</dbReference>
<dbReference type="InterPro" id="IPR037872">
    <property type="entry name" value="Rab3"/>
</dbReference>
<dbReference type="InterPro" id="IPR005225">
    <property type="entry name" value="Small_GTP-bd"/>
</dbReference>
<dbReference type="InterPro" id="IPR001806">
    <property type="entry name" value="Small_GTPase"/>
</dbReference>
<dbReference type="InterPro" id="IPR050305">
    <property type="entry name" value="Small_GTPase_Rab"/>
</dbReference>
<dbReference type="NCBIfam" id="TIGR00231">
    <property type="entry name" value="small_GTP"/>
    <property type="match status" value="1"/>
</dbReference>
<dbReference type="PANTHER" id="PTHR47980">
    <property type="entry name" value="LD44762P"/>
    <property type="match status" value="1"/>
</dbReference>
<dbReference type="Pfam" id="PF00071">
    <property type="entry name" value="Ras"/>
    <property type="match status" value="1"/>
</dbReference>
<dbReference type="PRINTS" id="PR00449">
    <property type="entry name" value="RASTRNSFRMNG"/>
</dbReference>
<dbReference type="SMART" id="SM00175">
    <property type="entry name" value="RAB"/>
    <property type="match status" value="1"/>
</dbReference>
<dbReference type="SMART" id="SM00176">
    <property type="entry name" value="RAN"/>
    <property type="match status" value="1"/>
</dbReference>
<dbReference type="SMART" id="SM00173">
    <property type="entry name" value="RAS"/>
    <property type="match status" value="1"/>
</dbReference>
<dbReference type="SMART" id="SM00174">
    <property type="entry name" value="RHO"/>
    <property type="match status" value="1"/>
</dbReference>
<dbReference type="SUPFAM" id="SSF52540">
    <property type="entry name" value="P-loop containing nucleoside triphosphate hydrolases"/>
    <property type="match status" value="1"/>
</dbReference>
<dbReference type="PROSITE" id="PS51419">
    <property type="entry name" value="RAB"/>
    <property type="match status" value="1"/>
</dbReference>
<gene>
    <name type="primary">RAB3B</name>
</gene>
<comment type="function">
    <text evidence="4">The small GTPases Rab are key regulators of intracellular membrane trafficking, from the formation of transport vesicles to their fusion with membranes. Rabs cycle between an inactive GDP-bound form and an active GTP-bound form that is able to recruit to membranes different sets of downstream effectors directly responsible for vesicle formation, movement, tethering and fusion.</text>
</comment>
<comment type="catalytic activity">
    <reaction evidence="4">
        <text>GTP + H2O = GDP + phosphate + H(+)</text>
        <dbReference type="Rhea" id="RHEA:19669"/>
        <dbReference type="ChEBI" id="CHEBI:15377"/>
        <dbReference type="ChEBI" id="CHEBI:15378"/>
        <dbReference type="ChEBI" id="CHEBI:37565"/>
        <dbReference type="ChEBI" id="CHEBI:43474"/>
        <dbReference type="ChEBI" id="CHEBI:58189"/>
        <dbReference type="EC" id="3.6.5.2"/>
    </reaction>
    <physiologicalReaction direction="left-to-right" evidence="4">
        <dbReference type="Rhea" id="RHEA:19670"/>
    </physiologicalReaction>
</comment>
<comment type="cofactor">
    <cofactor evidence="4">
        <name>Mg(2+)</name>
        <dbReference type="ChEBI" id="CHEBI:18420"/>
    </cofactor>
</comment>
<comment type="activity regulation">
    <text evidence="3">Regulated by guanine nucleotide exchange factors (GEFs) which promote the exchange of bound GDP for free GTP. Regulated by GTPase activating proteins (GAPs) which increase the GTP hydrolysis activity. Inhibited by GDP dissociation inhibitors (GDIs) which prevent Rab-GDP dissociation.</text>
</comment>
<comment type="subunit">
    <text evidence="4 6">Interacts with RIMS1, RIMS2, RPH3A and RPH3AL. The GTP-bound form interacts with GAS8/DRC4 (via coiled-coil domains) (By similarity). Interacts with GDI2, CHM and CHML; phosphorylation at Thr-86 disrupts these interactions (By similarity). Interacts with MADD (via uDENN domain); the GTP-bound form is preferred for interaction (By similarity).</text>
</comment>
<comment type="subcellular location">
    <subcellularLocation>
        <location evidence="7">Cell membrane</location>
        <topology evidence="7">Lipid-anchor</topology>
        <orientation evidence="7">Cytoplasmic side</orientation>
    </subcellularLocation>
    <subcellularLocation>
        <location evidence="6">Golgi apparatus</location>
    </subcellularLocation>
    <text evidence="6">Colocalizes with GAS8/DRC4 in the Golgi apparatus.</text>
</comment>
<comment type="domain">
    <text evidence="4">Switch 1, switch 2 and the interswitch regions are characteristic of Rab GTPases and mediate the interactions with Rab downstream effectors. The switch regions undergo conformational changes upon nucleotide binding which drives interaction with specific sets of effector proteins, with most effectors only binding to GTP-bound Rab.</text>
</comment>
<comment type="PTM">
    <text evidence="4">Phosphorylation of Thr-86 in the switch II region by LRRK2 prevents the association of RAB regulatory proteins, including CHM, CHML and RAB GDP dissociation inhibitor GDI2.</text>
</comment>
<comment type="similarity">
    <text evidence="7">Belongs to the small GTPase superfamily. Rab family.</text>
</comment>
<name>RAB3B_MESAU</name>
<proteinExistence type="evidence at transcript level"/>
<protein>
    <recommendedName>
        <fullName>Ras-related protein Rab-3B</fullName>
        <ecNumber evidence="4">3.6.5.2</ecNumber>
    </recommendedName>
</protein>
<organism>
    <name type="scientific">Mesocricetus auratus</name>
    <name type="common">Golden hamster</name>
    <dbReference type="NCBI Taxonomy" id="10036"/>
    <lineage>
        <taxon>Eukaryota</taxon>
        <taxon>Metazoa</taxon>
        <taxon>Chordata</taxon>
        <taxon>Craniata</taxon>
        <taxon>Vertebrata</taxon>
        <taxon>Euteleostomi</taxon>
        <taxon>Mammalia</taxon>
        <taxon>Eutheria</taxon>
        <taxon>Euarchontoglires</taxon>
        <taxon>Glires</taxon>
        <taxon>Rodentia</taxon>
        <taxon>Myomorpha</taxon>
        <taxon>Muroidea</taxon>
        <taxon>Cricetidae</taxon>
        <taxon>Cricetinae</taxon>
        <taxon>Mesocricetus</taxon>
    </lineage>
</organism>
<feature type="initiator methionine" description="Removed" evidence="2">
    <location>
        <position position="1"/>
    </location>
</feature>
<feature type="chain" id="PRO_0000270790" description="Ras-related protein Rab-3B">
    <location>
        <begin position="2"/>
        <end position="219"/>
    </location>
</feature>
<feature type="short sequence motif" description="Switch 1" evidence="4">
    <location>
        <begin position="45"/>
        <end position="58"/>
    </location>
</feature>
<feature type="short sequence motif" description="Switch 2" evidence="4">
    <location>
        <begin position="78"/>
        <end position="96"/>
    </location>
</feature>
<feature type="binding site" evidence="4">
    <location>
        <position position="31"/>
    </location>
    <ligand>
        <name>GTP</name>
        <dbReference type="ChEBI" id="CHEBI:37565"/>
    </ligand>
</feature>
<feature type="binding site" evidence="4">
    <location>
        <position position="32"/>
    </location>
    <ligand>
        <name>GTP</name>
        <dbReference type="ChEBI" id="CHEBI:37565"/>
    </ligand>
</feature>
<feature type="binding site" evidence="4">
    <location>
        <position position="33"/>
    </location>
    <ligand>
        <name>GTP</name>
        <dbReference type="ChEBI" id="CHEBI:37565"/>
    </ligand>
</feature>
<feature type="binding site" evidence="4">
    <location>
        <position position="34"/>
    </location>
    <ligand>
        <name>GTP</name>
        <dbReference type="ChEBI" id="CHEBI:37565"/>
    </ligand>
</feature>
<feature type="binding site" evidence="4">
    <location>
        <position position="35"/>
    </location>
    <ligand>
        <name>GTP</name>
        <dbReference type="ChEBI" id="CHEBI:37565"/>
    </ligand>
</feature>
<feature type="binding site" evidence="4">
    <location>
        <position position="36"/>
    </location>
    <ligand>
        <name>GTP</name>
        <dbReference type="ChEBI" id="CHEBI:37565"/>
    </ligand>
</feature>
<feature type="binding site" evidence="4">
    <location>
        <position position="36"/>
    </location>
    <ligand>
        <name>Mg(2+)</name>
        <dbReference type="ChEBI" id="CHEBI:18420"/>
    </ligand>
</feature>
<feature type="binding site" evidence="4">
    <location>
        <position position="37"/>
    </location>
    <ligand>
        <name>GTP</name>
        <dbReference type="ChEBI" id="CHEBI:37565"/>
    </ligand>
</feature>
<feature type="binding site" evidence="4">
    <location>
        <position position="49"/>
    </location>
    <ligand>
        <name>GTP</name>
        <dbReference type="ChEBI" id="CHEBI:37565"/>
    </ligand>
</feature>
<feature type="binding site" evidence="4">
    <location>
        <position position="53"/>
    </location>
    <ligand>
        <name>GTP</name>
        <dbReference type="ChEBI" id="CHEBI:37565"/>
    </ligand>
</feature>
<feature type="binding site" evidence="4">
    <location>
        <position position="54"/>
    </location>
    <ligand>
        <name>Mg(2+)</name>
        <dbReference type="ChEBI" id="CHEBI:18420"/>
    </ligand>
</feature>
<feature type="binding site" evidence="4">
    <location>
        <position position="77"/>
    </location>
    <ligand>
        <name>Mg(2+)</name>
        <dbReference type="ChEBI" id="CHEBI:18420"/>
    </ligand>
</feature>
<feature type="binding site" evidence="4">
    <location>
        <position position="80"/>
    </location>
    <ligand>
        <name>GTP</name>
        <dbReference type="ChEBI" id="CHEBI:37565"/>
    </ligand>
</feature>
<feature type="binding site" evidence="4">
    <location>
        <position position="135"/>
    </location>
    <ligand>
        <name>GTP</name>
        <dbReference type="ChEBI" id="CHEBI:37565"/>
    </ligand>
</feature>
<feature type="binding site" evidence="4">
    <location>
        <position position="136"/>
    </location>
    <ligand>
        <name>GTP</name>
        <dbReference type="ChEBI" id="CHEBI:37565"/>
    </ligand>
</feature>
<feature type="binding site" evidence="4">
    <location>
        <position position="138"/>
    </location>
    <ligand>
        <name>GTP</name>
        <dbReference type="ChEBI" id="CHEBI:37565"/>
    </ligand>
</feature>
<feature type="binding site" evidence="4">
    <location>
        <position position="166"/>
    </location>
    <ligand>
        <name>GTP</name>
        <dbReference type="ChEBI" id="CHEBI:37565"/>
    </ligand>
</feature>
<feature type="binding site" evidence="4">
    <location>
        <position position="167"/>
    </location>
    <ligand>
        <name>GTP</name>
        <dbReference type="ChEBI" id="CHEBI:37565"/>
    </ligand>
</feature>
<feature type="modified residue" description="N-acetylalanine" evidence="2">
    <location>
        <position position="2"/>
    </location>
</feature>
<feature type="modified residue" description="Phosphothreonine" evidence="4">
    <location>
        <position position="86"/>
    </location>
</feature>
<feature type="modified residue" description="Phosphoserine" evidence="5">
    <location>
        <position position="188"/>
    </location>
</feature>
<feature type="modified residue" description="Phosphoserine" evidence="4">
    <location>
        <position position="190"/>
    </location>
</feature>
<feature type="modified residue" description="Cysteine methyl ester" evidence="1">
    <location>
        <position position="219"/>
    </location>
</feature>
<feature type="lipid moiety-binding region" description="S-geranylgeranyl cysteine" evidence="1">
    <location>
        <position position="217"/>
    </location>
</feature>
<feature type="lipid moiety-binding region" description="S-geranylgeranyl cysteine" evidence="1">
    <location>
        <position position="219"/>
    </location>
</feature>
<sequence>MASVTDGKTGVKDASDQNFDYMFKLLIIGNSSVGKTSFLFRYADDTFTPAFVSTVGIDFKVKTVYRHEKRVKLQIWDTAGQERYRTITTAYYRGAMGFILMYDITNEESFNAVQDWATQIKTYSWDNAQVILVGNKCDMEEERVVPTEKGRLLAEQLGFDFFEASAKENISVRQAFERLVDAICDKMSDSLDTDPSVLGASKTTRLSDTPPLLQQNCSC</sequence>
<accession>Q5KTJ7</accession>
<evidence type="ECO:0000250" key="1"/>
<evidence type="ECO:0000250" key="2">
    <source>
        <dbReference type="UniProtKB" id="O95716"/>
    </source>
</evidence>
<evidence type="ECO:0000250" key="3">
    <source>
        <dbReference type="UniProtKB" id="P20336"/>
    </source>
</evidence>
<evidence type="ECO:0000250" key="4">
    <source>
        <dbReference type="UniProtKB" id="P20337"/>
    </source>
</evidence>
<evidence type="ECO:0000250" key="5">
    <source>
        <dbReference type="UniProtKB" id="Q63941"/>
    </source>
</evidence>
<evidence type="ECO:0000250" key="6">
    <source>
        <dbReference type="UniProtKB" id="Q9CZT8"/>
    </source>
</evidence>
<evidence type="ECO:0000305" key="7"/>